<dbReference type="EC" id="3.6.1.-" evidence="1"/>
<dbReference type="EMBL" id="AP006716">
    <property type="protein sequence ID" value="BAE05003.1"/>
    <property type="molecule type" value="Genomic_DNA"/>
</dbReference>
<dbReference type="RefSeq" id="WP_011275979.1">
    <property type="nucleotide sequence ID" value="NC_007168.1"/>
</dbReference>
<dbReference type="SMR" id="Q4L5S2"/>
<dbReference type="GeneID" id="93781072"/>
<dbReference type="KEGG" id="sha:SH1694"/>
<dbReference type="eggNOG" id="COG1162">
    <property type="taxonomic scope" value="Bacteria"/>
</dbReference>
<dbReference type="HOGENOM" id="CLU_033617_2_1_9"/>
<dbReference type="OrthoDB" id="9809485at2"/>
<dbReference type="Proteomes" id="UP000000543">
    <property type="component" value="Chromosome"/>
</dbReference>
<dbReference type="GO" id="GO:0005737">
    <property type="term" value="C:cytoplasm"/>
    <property type="evidence" value="ECO:0007669"/>
    <property type="project" value="UniProtKB-SubCell"/>
</dbReference>
<dbReference type="GO" id="GO:0005525">
    <property type="term" value="F:GTP binding"/>
    <property type="evidence" value="ECO:0007669"/>
    <property type="project" value="UniProtKB-UniRule"/>
</dbReference>
<dbReference type="GO" id="GO:0003924">
    <property type="term" value="F:GTPase activity"/>
    <property type="evidence" value="ECO:0007669"/>
    <property type="project" value="UniProtKB-UniRule"/>
</dbReference>
<dbReference type="GO" id="GO:0046872">
    <property type="term" value="F:metal ion binding"/>
    <property type="evidence" value="ECO:0007669"/>
    <property type="project" value="UniProtKB-KW"/>
</dbReference>
<dbReference type="GO" id="GO:0019843">
    <property type="term" value="F:rRNA binding"/>
    <property type="evidence" value="ECO:0007669"/>
    <property type="project" value="UniProtKB-KW"/>
</dbReference>
<dbReference type="GO" id="GO:0042274">
    <property type="term" value="P:ribosomal small subunit biogenesis"/>
    <property type="evidence" value="ECO:0007669"/>
    <property type="project" value="UniProtKB-UniRule"/>
</dbReference>
<dbReference type="CDD" id="cd04466">
    <property type="entry name" value="S1_YloQ_GTPase"/>
    <property type="match status" value="1"/>
</dbReference>
<dbReference type="CDD" id="cd01854">
    <property type="entry name" value="YjeQ_EngC"/>
    <property type="match status" value="1"/>
</dbReference>
<dbReference type="Gene3D" id="2.40.50.140">
    <property type="entry name" value="Nucleic acid-binding proteins"/>
    <property type="match status" value="1"/>
</dbReference>
<dbReference type="Gene3D" id="3.40.50.300">
    <property type="entry name" value="P-loop containing nucleotide triphosphate hydrolases"/>
    <property type="match status" value="1"/>
</dbReference>
<dbReference type="Gene3D" id="1.10.40.50">
    <property type="entry name" value="Probable gtpase engc, domain 3"/>
    <property type="match status" value="1"/>
</dbReference>
<dbReference type="HAMAP" id="MF_01820">
    <property type="entry name" value="GTPase_RsgA"/>
    <property type="match status" value="1"/>
</dbReference>
<dbReference type="InterPro" id="IPR030378">
    <property type="entry name" value="G_CP_dom"/>
</dbReference>
<dbReference type="InterPro" id="IPR012340">
    <property type="entry name" value="NA-bd_OB-fold"/>
</dbReference>
<dbReference type="InterPro" id="IPR027417">
    <property type="entry name" value="P-loop_NTPase"/>
</dbReference>
<dbReference type="InterPro" id="IPR004881">
    <property type="entry name" value="Ribosome_biogen_GTPase_RsgA"/>
</dbReference>
<dbReference type="InterPro" id="IPR010914">
    <property type="entry name" value="RsgA_GTPase_dom"/>
</dbReference>
<dbReference type="InterPro" id="IPR031944">
    <property type="entry name" value="RsgA_N"/>
</dbReference>
<dbReference type="NCBIfam" id="TIGR00157">
    <property type="entry name" value="ribosome small subunit-dependent GTPase A"/>
    <property type="match status" value="1"/>
</dbReference>
<dbReference type="PANTHER" id="PTHR32120">
    <property type="entry name" value="SMALL RIBOSOMAL SUBUNIT BIOGENESIS GTPASE RSGA"/>
    <property type="match status" value="1"/>
</dbReference>
<dbReference type="PANTHER" id="PTHR32120:SF11">
    <property type="entry name" value="SMALL RIBOSOMAL SUBUNIT BIOGENESIS GTPASE RSGA 1, MITOCHONDRIAL-RELATED"/>
    <property type="match status" value="1"/>
</dbReference>
<dbReference type="Pfam" id="PF03193">
    <property type="entry name" value="RsgA_GTPase"/>
    <property type="match status" value="1"/>
</dbReference>
<dbReference type="Pfam" id="PF16745">
    <property type="entry name" value="RsgA_N"/>
    <property type="match status" value="1"/>
</dbReference>
<dbReference type="SUPFAM" id="SSF50249">
    <property type="entry name" value="Nucleic acid-binding proteins"/>
    <property type="match status" value="1"/>
</dbReference>
<dbReference type="SUPFAM" id="SSF52540">
    <property type="entry name" value="P-loop containing nucleoside triphosphate hydrolases"/>
    <property type="match status" value="1"/>
</dbReference>
<dbReference type="PROSITE" id="PS50936">
    <property type="entry name" value="ENGC_GTPASE"/>
    <property type="match status" value="1"/>
</dbReference>
<dbReference type="PROSITE" id="PS51721">
    <property type="entry name" value="G_CP"/>
    <property type="match status" value="1"/>
</dbReference>
<evidence type="ECO:0000255" key="1">
    <source>
        <dbReference type="HAMAP-Rule" id="MF_01820"/>
    </source>
</evidence>
<evidence type="ECO:0000255" key="2">
    <source>
        <dbReference type="PROSITE-ProRule" id="PRU01058"/>
    </source>
</evidence>
<keyword id="KW-0963">Cytoplasm</keyword>
<keyword id="KW-0342">GTP-binding</keyword>
<keyword id="KW-0378">Hydrolase</keyword>
<keyword id="KW-0479">Metal-binding</keyword>
<keyword id="KW-0547">Nucleotide-binding</keyword>
<keyword id="KW-0690">Ribosome biogenesis</keyword>
<keyword id="KW-0694">RNA-binding</keyword>
<keyword id="KW-0699">rRNA-binding</keyword>
<keyword id="KW-0862">Zinc</keyword>
<protein>
    <recommendedName>
        <fullName evidence="1">Small ribosomal subunit biogenesis GTPase RsgA</fullName>
        <ecNumber evidence="1">3.6.1.-</ecNumber>
    </recommendedName>
</protein>
<proteinExistence type="inferred from homology"/>
<accession>Q4L5S2</accession>
<name>RSGA_STAHJ</name>
<feature type="chain" id="PRO_0000171521" description="Small ribosomal subunit biogenesis GTPase RsgA">
    <location>
        <begin position="1"/>
        <end position="291"/>
    </location>
</feature>
<feature type="domain" description="CP-type G" evidence="2">
    <location>
        <begin position="63"/>
        <end position="221"/>
    </location>
</feature>
<feature type="binding site" evidence="1">
    <location>
        <begin position="112"/>
        <end position="115"/>
    </location>
    <ligand>
        <name>GTP</name>
        <dbReference type="ChEBI" id="CHEBI:37565"/>
    </ligand>
</feature>
<feature type="binding site" evidence="1">
    <location>
        <begin position="164"/>
        <end position="172"/>
    </location>
    <ligand>
        <name>GTP</name>
        <dbReference type="ChEBI" id="CHEBI:37565"/>
    </ligand>
</feature>
<feature type="binding site" evidence="1">
    <location>
        <position position="245"/>
    </location>
    <ligand>
        <name>Zn(2+)</name>
        <dbReference type="ChEBI" id="CHEBI:29105"/>
    </ligand>
</feature>
<feature type="binding site" evidence="1">
    <location>
        <position position="250"/>
    </location>
    <ligand>
        <name>Zn(2+)</name>
        <dbReference type="ChEBI" id="CHEBI:29105"/>
    </ligand>
</feature>
<feature type="binding site" evidence="1">
    <location>
        <position position="252"/>
    </location>
    <ligand>
        <name>Zn(2+)</name>
        <dbReference type="ChEBI" id="CHEBI:29105"/>
    </ligand>
</feature>
<feature type="binding site" evidence="1">
    <location>
        <position position="258"/>
    </location>
    <ligand>
        <name>Zn(2+)</name>
        <dbReference type="ChEBI" id="CHEBI:29105"/>
    </ligand>
</feature>
<sequence>METGRIIKLISGVYQVDVDGTLYDTKPRGLFRKKKFSPIVGDIVDFEIQNTSEGYIHHVHERHNELKRPPVSNIDGLIIVMSAVEPDFSTQLLDRFLVIAHSYDLEPSILVTKKDLASENEIEQINAWLKIYEEIGYNTQFVGKHTSQQEVVATWPKGLIVLSGQSGVGKSTFINAFKPELNLETNHISKSLNRGKHTTRHVELFERESGFIADTPGFSALDFGHIDKDELKHYFIEMNRFGEECKFRNCNHIKEPKCHVKQQLENGYLAQFRYDHYIQLYNEISNRKVRY</sequence>
<gene>
    <name evidence="1" type="primary">rsgA</name>
    <name type="ordered locus">SH1694</name>
</gene>
<organism>
    <name type="scientific">Staphylococcus haemolyticus (strain JCSC1435)</name>
    <dbReference type="NCBI Taxonomy" id="279808"/>
    <lineage>
        <taxon>Bacteria</taxon>
        <taxon>Bacillati</taxon>
        <taxon>Bacillota</taxon>
        <taxon>Bacilli</taxon>
        <taxon>Bacillales</taxon>
        <taxon>Staphylococcaceae</taxon>
        <taxon>Staphylococcus</taxon>
    </lineage>
</organism>
<reference key="1">
    <citation type="journal article" date="2005" name="J. Bacteriol.">
        <title>Whole-genome sequencing of Staphylococcus haemolyticus uncovers the extreme plasticity of its genome and the evolution of human-colonizing staphylococcal species.</title>
        <authorList>
            <person name="Takeuchi F."/>
            <person name="Watanabe S."/>
            <person name="Baba T."/>
            <person name="Yuzawa H."/>
            <person name="Ito T."/>
            <person name="Morimoto Y."/>
            <person name="Kuroda M."/>
            <person name="Cui L."/>
            <person name="Takahashi M."/>
            <person name="Ankai A."/>
            <person name="Baba S."/>
            <person name="Fukui S."/>
            <person name="Lee J.C."/>
            <person name="Hiramatsu K."/>
        </authorList>
    </citation>
    <scope>NUCLEOTIDE SEQUENCE [LARGE SCALE GENOMIC DNA]</scope>
    <source>
        <strain>JCSC1435</strain>
    </source>
</reference>
<comment type="function">
    <text evidence="1">One of several proteins that assist in the late maturation steps of the functional core of the 30S ribosomal subunit. Helps release RbfA from mature subunits. May play a role in the assembly of ribosomal proteins into the subunit. Circularly permuted GTPase that catalyzes slow GTP hydrolysis, GTPase activity is stimulated by the 30S ribosomal subunit.</text>
</comment>
<comment type="cofactor">
    <cofactor evidence="1">
        <name>Zn(2+)</name>
        <dbReference type="ChEBI" id="CHEBI:29105"/>
    </cofactor>
    <text evidence="1">Binds 1 zinc ion per subunit.</text>
</comment>
<comment type="subunit">
    <text evidence="1">Monomer. Associates with 30S ribosomal subunit, binds 16S rRNA.</text>
</comment>
<comment type="subcellular location">
    <subcellularLocation>
        <location evidence="1">Cytoplasm</location>
    </subcellularLocation>
</comment>
<comment type="similarity">
    <text evidence="1">Belongs to the TRAFAC class YlqF/YawG GTPase family. RsgA subfamily.</text>
</comment>